<name>GATA_ACIB5</name>
<proteinExistence type="inferred from homology"/>
<protein>
    <recommendedName>
        <fullName evidence="1">Glutamyl-tRNA(Gln) amidotransferase subunit A</fullName>
        <shortName evidence="1">Glu-ADT subunit A</shortName>
        <ecNumber evidence="1">6.3.5.7</ecNumber>
    </recommendedName>
</protein>
<dbReference type="EC" id="6.3.5.7" evidence="1"/>
<dbReference type="EMBL" id="CP001182">
    <property type="protein sequence ID" value="ACJ41864.1"/>
    <property type="molecule type" value="Genomic_DNA"/>
</dbReference>
<dbReference type="RefSeq" id="WP_000130656.1">
    <property type="nucleotide sequence ID" value="NC_011586.2"/>
</dbReference>
<dbReference type="SMR" id="B7I7N2"/>
<dbReference type="KEGG" id="abn:AB57_3285"/>
<dbReference type="HOGENOM" id="CLU_009600_0_3_6"/>
<dbReference type="Proteomes" id="UP000007094">
    <property type="component" value="Chromosome"/>
</dbReference>
<dbReference type="GO" id="GO:0030956">
    <property type="term" value="C:glutamyl-tRNA(Gln) amidotransferase complex"/>
    <property type="evidence" value="ECO:0007669"/>
    <property type="project" value="InterPro"/>
</dbReference>
<dbReference type="GO" id="GO:0005524">
    <property type="term" value="F:ATP binding"/>
    <property type="evidence" value="ECO:0007669"/>
    <property type="project" value="UniProtKB-KW"/>
</dbReference>
<dbReference type="GO" id="GO:0050567">
    <property type="term" value="F:glutaminyl-tRNA synthase (glutamine-hydrolyzing) activity"/>
    <property type="evidence" value="ECO:0007669"/>
    <property type="project" value="UniProtKB-UniRule"/>
</dbReference>
<dbReference type="GO" id="GO:0006412">
    <property type="term" value="P:translation"/>
    <property type="evidence" value="ECO:0007669"/>
    <property type="project" value="UniProtKB-UniRule"/>
</dbReference>
<dbReference type="Gene3D" id="3.90.1300.10">
    <property type="entry name" value="Amidase signature (AS) domain"/>
    <property type="match status" value="1"/>
</dbReference>
<dbReference type="HAMAP" id="MF_00120">
    <property type="entry name" value="GatA"/>
    <property type="match status" value="1"/>
</dbReference>
<dbReference type="InterPro" id="IPR000120">
    <property type="entry name" value="Amidase"/>
</dbReference>
<dbReference type="InterPro" id="IPR020556">
    <property type="entry name" value="Amidase_CS"/>
</dbReference>
<dbReference type="InterPro" id="IPR023631">
    <property type="entry name" value="Amidase_dom"/>
</dbReference>
<dbReference type="InterPro" id="IPR036928">
    <property type="entry name" value="AS_sf"/>
</dbReference>
<dbReference type="InterPro" id="IPR004412">
    <property type="entry name" value="GatA"/>
</dbReference>
<dbReference type="NCBIfam" id="TIGR00132">
    <property type="entry name" value="gatA"/>
    <property type="match status" value="1"/>
</dbReference>
<dbReference type="PANTHER" id="PTHR11895:SF151">
    <property type="entry name" value="GLUTAMYL-TRNA(GLN) AMIDOTRANSFERASE SUBUNIT A"/>
    <property type="match status" value="1"/>
</dbReference>
<dbReference type="PANTHER" id="PTHR11895">
    <property type="entry name" value="TRANSAMIDASE"/>
    <property type="match status" value="1"/>
</dbReference>
<dbReference type="Pfam" id="PF01425">
    <property type="entry name" value="Amidase"/>
    <property type="match status" value="1"/>
</dbReference>
<dbReference type="SUPFAM" id="SSF75304">
    <property type="entry name" value="Amidase signature (AS) enzymes"/>
    <property type="match status" value="1"/>
</dbReference>
<dbReference type="PROSITE" id="PS00571">
    <property type="entry name" value="AMIDASES"/>
    <property type="match status" value="1"/>
</dbReference>
<gene>
    <name evidence="1" type="primary">gatA</name>
    <name type="ordered locus">AB57_3285</name>
</gene>
<sequence>MTDLHRLSIRELAEGLSQAKFSSRELTEHYLKRIAKIDPQVKSYVTVTPEQALREADAADAALKAGNATALTGIPLAHKDIFCTKGIKTTAGSKMLDNFISPYDATVVEKTKAAGLVTLGKVNMDEFAMGSTSESSYVGATSNPWALDHVPGGSSGGSAAAVAADLAPFATGTDTGGSIRQPASFCGLTGLKPTYGRVSRFGIIAYASSLDQAGPMARSAEDCAYLMNVIAGHDAKDSTSVKKELDDYVANLNNTSVKGLRIGIPKQYFNVAGLDADVKARVEESLKKLEEMGAALVEIDLNMTEAYVPTYYLIAPAEASSNLSRYDGVRYGYRCENPADLMDLYKRSRSEGFGPEVQRRILIGTYALSAGYYDAYYVKAQKVRRLIQQDFLKAFENVDVIAAPAAPTTAYKIGASLDPVEMYLGDIYTIAVNLAGLPAINAPVGFDKDNLPVGLQLIGNYWSESQLLSIVHQYQQNTDWHTKRAAIAEENA</sequence>
<organism>
    <name type="scientific">Acinetobacter baumannii (strain AB0057)</name>
    <dbReference type="NCBI Taxonomy" id="480119"/>
    <lineage>
        <taxon>Bacteria</taxon>
        <taxon>Pseudomonadati</taxon>
        <taxon>Pseudomonadota</taxon>
        <taxon>Gammaproteobacteria</taxon>
        <taxon>Moraxellales</taxon>
        <taxon>Moraxellaceae</taxon>
        <taxon>Acinetobacter</taxon>
        <taxon>Acinetobacter calcoaceticus/baumannii complex</taxon>
    </lineage>
</organism>
<evidence type="ECO:0000255" key="1">
    <source>
        <dbReference type="HAMAP-Rule" id="MF_00120"/>
    </source>
</evidence>
<accession>B7I7N2</accession>
<reference key="1">
    <citation type="journal article" date="2008" name="J. Bacteriol.">
        <title>Comparative genome sequence analysis of multidrug-resistant Acinetobacter baumannii.</title>
        <authorList>
            <person name="Adams M.D."/>
            <person name="Goglin K."/>
            <person name="Molyneaux N."/>
            <person name="Hujer K.M."/>
            <person name="Lavender H."/>
            <person name="Jamison J.J."/>
            <person name="MacDonald I.J."/>
            <person name="Martin K.M."/>
            <person name="Russo T."/>
            <person name="Campagnari A.A."/>
            <person name="Hujer A.M."/>
            <person name="Bonomo R.A."/>
            <person name="Gill S.R."/>
        </authorList>
    </citation>
    <scope>NUCLEOTIDE SEQUENCE [LARGE SCALE GENOMIC DNA]</scope>
    <source>
        <strain>AB0057</strain>
    </source>
</reference>
<feature type="chain" id="PRO_1000117601" description="Glutamyl-tRNA(Gln) amidotransferase subunit A">
    <location>
        <begin position="1"/>
        <end position="492"/>
    </location>
</feature>
<feature type="active site" description="Charge relay system" evidence="1">
    <location>
        <position position="79"/>
    </location>
</feature>
<feature type="active site" description="Charge relay system" evidence="1">
    <location>
        <position position="154"/>
    </location>
</feature>
<feature type="active site" description="Acyl-ester intermediate" evidence="1">
    <location>
        <position position="178"/>
    </location>
</feature>
<comment type="function">
    <text evidence="1">Allows the formation of correctly charged Gln-tRNA(Gln) through the transamidation of misacylated Glu-tRNA(Gln) in organisms which lack glutaminyl-tRNA synthetase. The reaction takes place in the presence of glutamine and ATP through an activated gamma-phospho-Glu-tRNA(Gln).</text>
</comment>
<comment type="catalytic activity">
    <reaction evidence="1">
        <text>L-glutamyl-tRNA(Gln) + L-glutamine + ATP + H2O = L-glutaminyl-tRNA(Gln) + L-glutamate + ADP + phosphate + H(+)</text>
        <dbReference type="Rhea" id="RHEA:17521"/>
        <dbReference type="Rhea" id="RHEA-COMP:9681"/>
        <dbReference type="Rhea" id="RHEA-COMP:9684"/>
        <dbReference type="ChEBI" id="CHEBI:15377"/>
        <dbReference type="ChEBI" id="CHEBI:15378"/>
        <dbReference type="ChEBI" id="CHEBI:29985"/>
        <dbReference type="ChEBI" id="CHEBI:30616"/>
        <dbReference type="ChEBI" id="CHEBI:43474"/>
        <dbReference type="ChEBI" id="CHEBI:58359"/>
        <dbReference type="ChEBI" id="CHEBI:78520"/>
        <dbReference type="ChEBI" id="CHEBI:78521"/>
        <dbReference type="ChEBI" id="CHEBI:456216"/>
        <dbReference type="EC" id="6.3.5.7"/>
    </reaction>
</comment>
<comment type="subunit">
    <text evidence="1">Heterotrimer of A, B and C subunits.</text>
</comment>
<comment type="similarity">
    <text evidence="1">Belongs to the amidase family. GatA subfamily.</text>
</comment>
<keyword id="KW-0067">ATP-binding</keyword>
<keyword id="KW-0436">Ligase</keyword>
<keyword id="KW-0547">Nucleotide-binding</keyword>
<keyword id="KW-0648">Protein biosynthesis</keyword>